<organism>
    <name type="scientific">Thermus thermophilus (strain ATCC BAA-163 / DSM 7039 / HB27)</name>
    <dbReference type="NCBI Taxonomy" id="262724"/>
    <lineage>
        <taxon>Bacteria</taxon>
        <taxon>Thermotogati</taxon>
        <taxon>Deinococcota</taxon>
        <taxon>Deinococci</taxon>
        <taxon>Thermales</taxon>
        <taxon>Thermaceae</taxon>
        <taxon>Thermus</taxon>
    </lineage>
</organism>
<gene>
    <name evidence="1" type="primary">hisF</name>
    <name type="ordered locus">TT_C1079</name>
</gene>
<comment type="function">
    <text evidence="1">IGPS catalyzes the conversion of PRFAR and glutamine to IGP, AICAR and glutamate. The HisF subunit catalyzes the cyclization activity that produces IGP and AICAR from PRFAR using the ammonia provided by the HisH subunit.</text>
</comment>
<comment type="catalytic activity">
    <reaction evidence="1">
        <text>5-[(5-phospho-1-deoxy-D-ribulos-1-ylimino)methylamino]-1-(5-phospho-beta-D-ribosyl)imidazole-4-carboxamide + L-glutamine = D-erythro-1-(imidazol-4-yl)glycerol 3-phosphate + 5-amino-1-(5-phospho-beta-D-ribosyl)imidazole-4-carboxamide + L-glutamate + H(+)</text>
        <dbReference type="Rhea" id="RHEA:24793"/>
        <dbReference type="ChEBI" id="CHEBI:15378"/>
        <dbReference type="ChEBI" id="CHEBI:29985"/>
        <dbReference type="ChEBI" id="CHEBI:58278"/>
        <dbReference type="ChEBI" id="CHEBI:58359"/>
        <dbReference type="ChEBI" id="CHEBI:58475"/>
        <dbReference type="ChEBI" id="CHEBI:58525"/>
        <dbReference type="EC" id="4.3.2.10"/>
    </reaction>
</comment>
<comment type="pathway">
    <text evidence="1">Amino-acid biosynthesis; L-histidine biosynthesis; L-histidine from 5-phospho-alpha-D-ribose 1-diphosphate: step 5/9.</text>
</comment>
<comment type="subunit">
    <text evidence="1">Heterodimer of HisH and HisF.</text>
</comment>
<comment type="subcellular location">
    <subcellularLocation>
        <location evidence="1">Cytoplasm</location>
    </subcellularLocation>
</comment>
<comment type="similarity">
    <text evidence="1">Belongs to the HisA/HisF family.</text>
</comment>
<name>HIS6_THET2</name>
<accession>P62453</accession>
<evidence type="ECO:0000255" key="1">
    <source>
        <dbReference type="HAMAP-Rule" id="MF_01013"/>
    </source>
</evidence>
<feature type="chain" id="PRO_0000142254" description="Imidazole glycerol phosphate synthase subunit HisF">
    <location>
        <begin position="1"/>
        <end position="252"/>
    </location>
</feature>
<feature type="active site" evidence="1">
    <location>
        <position position="12"/>
    </location>
</feature>
<feature type="active site" evidence="1">
    <location>
        <position position="131"/>
    </location>
</feature>
<dbReference type="EC" id="4.3.2.10" evidence="1"/>
<dbReference type="EMBL" id="AE017221">
    <property type="protein sequence ID" value="AAS81421.1"/>
    <property type="molecule type" value="Genomic_DNA"/>
</dbReference>
<dbReference type="RefSeq" id="WP_011173495.1">
    <property type="nucleotide sequence ID" value="NC_005835.1"/>
</dbReference>
<dbReference type="SMR" id="P62453"/>
<dbReference type="KEGG" id="tth:TT_C1079"/>
<dbReference type="eggNOG" id="COG0107">
    <property type="taxonomic scope" value="Bacteria"/>
</dbReference>
<dbReference type="HOGENOM" id="CLU_048577_4_0_0"/>
<dbReference type="OrthoDB" id="9781903at2"/>
<dbReference type="UniPathway" id="UPA00031">
    <property type="reaction ID" value="UER00010"/>
</dbReference>
<dbReference type="Proteomes" id="UP000000592">
    <property type="component" value="Chromosome"/>
</dbReference>
<dbReference type="GO" id="GO:0005737">
    <property type="term" value="C:cytoplasm"/>
    <property type="evidence" value="ECO:0007669"/>
    <property type="project" value="UniProtKB-SubCell"/>
</dbReference>
<dbReference type="GO" id="GO:0000107">
    <property type="term" value="F:imidazoleglycerol-phosphate synthase activity"/>
    <property type="evidence" value="ECO:0007669"/>
    <property type="project" value="UniProtKB-UniRule"/>
</dbReference>
<dbReference type="GO" id="GO:0016829">
    <property type="term" value="F:lyase activity"/>
    <property type="evidence" value="ECO:0007669"/>
    <property type="project" value="UniProtKB-KW"/>
</dbReference>
<dbReference type="GO" id="GO:0000105">
    <property type="term" value="P:L-histidine biosynthetic process"/>
    <property type="evidence" value="ECO:0007669"/>
    <property type="project" value="UniProtKB-UniRule"/>
</dbReference>
<dbReference type="CDD" id="cd04731">
    <property type="entry name" value="HisF"/>
    <property type="match status" value="1"/>
</dbReference>
<dbReference type="FunFam" id="3.20.20.70:FF:000006">
    <property type="entry name" value="Imidazole glycerol phosphate synthase subunit HisF"/>
    <property type="match status" value="1"/>
</dbReference>
<dbReference type="Gene3D" id="3.20.20.70">
    <property type="entry name" value="Aldolase class I"/>
    <property type="match status" value="1"/>
</dbReference>
<dbReference type="HAMAP" id="MF_01013">
    <property type="entry name" value="HisF"/>
    <property type="match status" value="1"/>
</dbReference>
<dbReference type="InterPro" id="IPR013785">
    <property type="entry name" value="Aldolase_TIM"/>
</dbReference>
<dbReference type="InterPro" id="IPR006062">
    <property type="entry name" value="His_biosynth"/>
</dbReference>
<dbReference type="InterPro" id="IPR004651">
    <property type="entry name" value="HisF"/>
</dbReference>
<dbReference type="InterPro" id="IPR050064">
    <property type="entry name" value="IGPS_HisA/HisF"/>
</dbReference>
<dbReference type="InterPro" id="IPR011060">
    <property type="entry name" value="RibuloseP-bd_barrel"/>
</dbReference>
<dbReference type="NCBIfam" id="TIGR00735">
    <property type="entry name" value="hisF"/>
    <property type="match status" value="1"/>
</dbReference>
<dbReference type="PANTHER" id="PTHR21235:SF2">
    <property type="entry name" value="IMIDAZOLE GLYCEROL PHOSPHATE SYNTHASE HISHF"/>
    <property type="match status" value="1"/>
</dbReference>
<dbReference type="PANTHER" id="PTHR21235">
    <property type="entry name" value="IMIDAZOLE GLYCEROL PHOSPHATE SYNTHASE SUBUNIT HISF/H IGP SYNTHASE SUBUNIT HISF/H"/>
    <property type="match status" value="1"/>
</dbReference>
<dbReference type="Pfam" id="PF00977">
    <property type="entry name" value="His_biosynth"/>
    <property type="match status" value="1"/>
</dbReference>
<dbReference type="SUPFAM" id="SSF51366">
    <property type="entry name" value="Ribulose-phoshate binding barrel"/>
    <property type="match status" value="1"/>
</dbReference>
<reference key="1">
    <citation type="journal article" date="2004" name="Nat. Biotechnol.">
        <title>The genome sequence of the extreme thermophile Thermus thermophilus.</title>
        <authorList>
            <person name="Henne A."/>
            <person name="Brueggemann H."/>
            <person name="Raasch C."/>
            <person name="Wiezer A."/>
            <person name="Hartsch T."/>
            <person name="Liesegang H."/>
            <person name="Johann A."/>
            <person name="Lienard T."/>
            <person name="Gohl O."/>
            <person name="Martinez-Arias R."/>
            <person name="Jacobi C."/>
            <person name="Starkuviene V."/>
            <person name="Schlenczeck S."/>
            <person name="Dencker S."/>
            <person name="Huber R."/>
            <person name="Klenk H.-P."/>
            <person name="Kramer W."/>
            <person name="Merkl R."/>
            <person name="Gottschalk G."/>
            <person name="Fritz H.-J."/>
        </authorList>
    </citation>
    <scope>NUCLEOTIDE SEQUENCE [LARGE SCALE GENOMIC DNA]</scope>
    <source>
        <strain>ATCC BAA-163 / DSM 7039 / HB27</strain>
    </source>
</reference>
<sequence>MSLAKRIVPCLDVHAGRVVKGVNFVNLRDAGDPVEAARAYDEAGADELVFLDISATHEERAILLDVVARVAERVFIPLTVGGGVRSLEDARKLLLSGADKVSVNSAAVRRPELIRELADHFGAQAVVLAIDARWRGDFPEVYVAGGRVPTGLHAVEWAVKGVELGAGEILLTSMDRDGTKEGYDLRLTRMVAEAVGVPVIASGGAGRMEHFLEAFQAGAEAALAASVFHFGEIPIPELKRYLAEKGVHVRLD</sequence>
<protein>
    <recommendedName>
        <fullName evidence="1">Imidazole glycerol phosphate synthase subunit HisF</fullName>
        <ecNumber evidence="1">4.3.2.10</ecNumber>
    </recommendedName>
    <alternativeName>
        <fullName evidence="1">IGP synthase cyclase subunit</fullName>
    </alternativeName>
    <alternativeName>
        <fullName evidence="1">IGP synthase subunit HisF</fullName>
    </alternativeName>
    <alternativeName>
        <fullName evidence="1">ImGP synthase subunit HisF</fullName>
        <shortName evidence="1">IGPS subunit HisF</shortName>
    </alternativeName>
</protein>
<proteinExistence type="inferred from homology"/>
<keyword id="KW-0028">Amino-acid biosynthesis</keyword>
<keyword id="KW-0963">Cytoplasm</keyword>
<keyword id="KW-0368">Histidine biosynthesis</keyword>
<keyword id="KW-0456">Lyase</keyword>